<accession>Q7ZTI5</accession>
<comment type="function">
    <text evidence="1">Component of the Mediator complex, a coactivator involved in the regulated transcription of nearly all RNA polymerase II-dependent genes. Mediator functions as a bridge to convey information from gene-specific regulatory proteins to the basal RNA polymerase II transcription machinery. Mediator is recruited to promoters by direct interactions with regulatory proteins and serves as a scaffold for the assembly of a functional preinitiation complex with RNA polymerase II and the general transcription factors (By similarity).</text>
</comment>
<comment type="subunit">
    <text evidence="1">Component of the Mediator complex.</text>
</comment>
<comment type="subcellular location">
    <subcellularLocation>
        <location evidence="3">Nucleus</location>
    </subcellularLocation>
</comment>
<comment type="similarity">
    <text evidence="3">Belongs to the Mediator complex subunit 21 family.</text>
</comment>
<proteinExistence type="evidence at transcript level"/>
<evidence type="ECO:0000250" key="1"/>
<evidence type="ECO:0000255" key="2"/>
<evidence type="ECO:0000305" key="3"/>
<organism>
    <name type="scientific">Danio rerio</name>
    <name type="common">Zebrafish</name>
    <name type="synonym">Brachydanio rerio</name>
    <dbReference type="NCBI Taxonomy" id="7955"/>
    <lineage>
        <taxon>Eukaryota</taxon>
        <taxon>Metazoa</taxon>
        <taxon>Chordata</taxon>
        <taxon>Craniata</taxon>
        <taxon>Vertebrata</taxon>
        <taxon>Euteleostomi</taxon>
        <taxon>Actinopterygii</taxon>
        <taxon>Neopterygii</taxon>
        <taxon>Teleostei</taxon>
        <taxon>Ostariophysi</taxon>
        <taxon>Cypriniformes</taxon>
        <taxon>Danionidae</taxon>
        <taxon>Danioninae</taxon>
        <taxon>Danio</taxon>
    </lineage>
</organism>
<sequence length="145" mass="15626">MADRLTQLQDAVNSLADQFCNAIGVLQQCAPPASFSNIQTAINKDQPSNPTEEYAQLFAALIARTAKDVDVLIDSLPSEESTAALQAASLRQLEEENQEAAARLEEVVYRGDALLEKIQTALADIAQSQLRTRSGAPSQQTPPES</sequence>
<reference key="1">
    <citation type="journal article" date="2013" name="Nature">
        <title>The zebrafish reference genome sequence and its relationship to the human genome.</title>
        <authorList>
            <person name="Howe K."/>
            <person name="Clark M.D."/>
            <person name="Torroja C.F."/>
            <person name="Torrance J."/>
            <person name="Berthelot C."/>
            <person name="Muffato M."/>
            <person name="Collins J.E."/>
            <person name="Humphray S."/>
            <person name="McLaren K."/>
            <person name="Matthews L."/>
            <person name="McLaren S."/>
            <person name="Sealy I."/>
            <person name="Caccamo M."/>
            <person name="Churcher C."/>
            <person name="Scott C."/>
            <person name="Barrett J.C."/>
            <person name="Koch R."/>
            <person name="Rauch G.J."/>
            <person name="White S."/>
            <person name="Chow W."/>
            <person name="Kilian B."/>
            <person name="Quintais L.T."/>
            <person name="Guerra-Assuncao J.A."/>
            <person name="Zhou Y."/>
            <person name="Gu Y."/>
            <person name="Yen J."/>
            <person name="Vogel J.H."/>
            <person name="Eyre T."/>
            <person name="Redmond S."/>
            <person name="Banerjee R."/>
            <person name="Chi J."/>
            <person name="Fu B."/>
            <person name="Langley E."/>
            <person name="Maguire S.F."/>
            <person name="Laird G.K."/>
            <person name="Lloyd D."/>
            <person name="Kenyon E."/>
            <person name="Donaldson S."/>
            <person name="Sehra H."/>
            <person name="Almeida-King J."/>
            <person name="Loveland J."/>
            <person name="Trevanion S."/>
            <person name="Jones M."/>
            <person name="Quail M."/>
            <person name="Willey D."/>
            <person name="Hunt A."/>
            <person name="Burton J."/>
            <person name="Sims S."/>
            <person name="McLay K."/>
            <person name="Plumb B."/>
            <person name="Davis J."/>
            <person name="Clee C."/>
            <person name="Oliver K."/>
            <person name="Clark R."/>
            <person name="Riddle C."/>
            <person name="Elliot D."/>
            <person name="Threadgold G."/>
            <person name="Harden G."/>
            <person name="Ware D."/>
            <person name="Begum S."/>
            <person name="Mortimore B."/>
            <person name="Kerry G."/>
            <person name="Heath P."/>
            <person name="Phillimore B."/>
            <person name="Tracey A."/>
            <person name="Corby N."/>
            <person name="Dunn M."/>
            <person name="Johnson C."/>
            <person name="Wood J."/>
            <person name="Clark S."/>
            <person name="Pelan S."/>
            <person name="Griffiths G."/>
            <person name="Smith M."/>
            <person name="Glithero R."/>
            <person name="Howden P."/>
            <person name="Barker N."/>
            <person name="Lloyd C."/>
            <person name="Stevens C."/>
            <person name="Harley J."/>
            <person name="Holt K."/>
            <person name="Panagiotidis G."/>
            <person name="Lovell J."/>
            <person name="Beasley H."/>
            <person name="Henderson C."/>
            <person name="Gordon D."/>
            <person name="Auger K."/>
            <person name="Wright D."/>
            <person name="Collins J."/>
            <person name="Raisen C."/>
            <person name="Dyer L."/>
            <person name="Leung K."/>
            <person name="Robertson L."/>
            <person name="Ambridge K."/>
            <person name="Leongamornlert D."/>
            <person name="McGuire S."/>
            <person name="Gilderthorp R."/>
            <person name="Griffiths C."/>
            <person name="Manthravadi D."/>
            <person name="Nichol S."/>
            <person name="Barker G."/>
            <person name="Whitehead S."/>
            <person name="Kay M."/>
            <person name="Brown J."/>
            <person name="Murnane C."/>
            <person name="Gray E."/>
            <person name="Humphries M."/>
            <person name="Sycamore N."/>
            <person name="Barker D."/>
            <person name="Saunders D."/>
            <person name="Wallis J."/>
            <person name="Babbage A."/>
            <person name="Hammond S."/>
            <person name="Mashreghi-Mohammadi M."/>
            <person name="Barr L."/>
            <person name="Martin S."/>
            <person name="Wray P."/>
            <person name="Ellington A."/>
            <person name="Matthews N."/>
            <person name="Ellwood M."/>
            <person name="Woodmansey R."/>
            <person name="Clark G."/>
            <person name="Cooper J."/>
            <person name="Tromans A."/>
            <person name="Grafham D."/>
            <person name="Skuce C."/>
            <person name="Pandian R."/>
            <person name="Andrews R."/>
            <person name="Harrison E."/>
            <person name="Kimberley A."/>
            <person name="Garnett J."/>
            <person name="Fosker N."/>
            <person name="Hall R."/>
            <person name="Garner P."/>
            <person name="Kelly D."/>
            <person name="Bird C."/>
            <person name="Palmer S."/>
            <person name="Gehring I."/>
            <person name="Berger A."/>
            <person name="Dooley C.M."/>
            <person name="Ersan-Urun Z."/>
            <person name="Eser C."/>
            <person name="Geiger H."/>
            <person name="Geisler M."/>
            <person name="Karotki L."/>
            <person name="Kirn A."/>
            <person name="Konantz J."/>
            <person name="Konantz M."/>
            <person name="Oberlander M."/>
            <person name="Rudolph-Geiger S."/>
            <person name="Teucke M."/>
            <person name="Lanz C."/>
            <person name="Raddatz G."/>
            <person name="Osoegawa K."/>
            <person name="Zhu B."/>
            <person name="Rapp A."/>
            <person name="Widaa S."/>
            <person name="Langford C."/>
            <person name="Yang F."/>
            <person name="Schuster S.C."/>
            <person name="Carter N.P."/>
            <person name="Harrow J."/>
            <person name="Ning Z."/>
            <person name="Herrero J."/>
            <person name="Searle S.M."/>
            <person name="Enright A."/>
            <person name="Geisler R."/>
            <person name="Plasterk R.H."/>
            <person name="Lee C."/>
            <person name="Westerfield M."/>
            <person name="de Jong P.J."/>
            <person name="Zon L.I."/>
            <person name="Postlethwait J.H."/>
            <person name="Nusslein-Volhard C."/>
            <person name="Hubbard T.J."/>
            <person name="Roest Crollius H."/>
            <person name="Rogers J."/>
            <person name="Stemple D.L."/>
        </authorList>
    </citation>
    <scope>NUCLEOTIDE SEQUENCE [LARGE SCALE GENOMIC DNA]</scope>
    <source>
        <strain>Tuebingen</strain>
    </source>
</reference>
<reference key="2">
    <citation type="submission" date="2003-03" db="EMBL/GenBank/DDBJ databases">
        <authorList>
            <consortium name="NIH - Zebrafish Gene Collection (ZGC) project"/>
        </authorList>
    </citation>
    <scope>NUCLEOTIDE SEQUENCE [LARGE SCALE MRNA]</scope>
    <source>
        <strain>SJD</strain>
    </source>
</reference>
<feature type="chain" id="PRO_0000305949" description="Mediator of RNA polymerase II transcription subunit 21">
    <location>
        <begin position="1"/>
        <end position="145"/>
    </location>
</feature>
<feature type="coiled-coil region" evidence="2">
    <location>
        <begin position="79"/>
        <end position="112"/>
    </location>
</feature>
<keyword id="KW-0010">Activator</keyword>
<keyword id="KW-0175">Coiled coil</keyword>
<keyword id="KW-0539">Nucleus</keyword>
<keyword id="KW-1185">Reference proteome</keyword>
<keyword id="KW-0804">Transcription</keyword>
<keyword id="KW-0805">Transcription regulation</keyword>
<gene>
    <name type="primary">med21</name>
    <name type="synonym">surb7</name>
    <name type="ORF">si:ch211-203h15.4</name>
</gene>
<protein>
    <recommendedName>
        <fullName>Mediator of RNA polymerase II transcription subunit 21</fullName>
    </recommendedName>
    <alternativeName>
        <fullName>Mediator complex subunit 21</fullName>
    </alternativeName>
    <alternativeName>
        <fullName>RNA polymerase II holoenzyme component SRB7</fullName>
        <shortName>RNAPII complex component SRB7</shortName>
    </alternativeName>
</protein>
<name>MED21_DANRE</name>
<dbReference type="EMBL" id="CR847994">
    <property type="protein sequence ID" value="CAK04412.1"/>
    <property type="molecule type" value="Genomic_DNA"/>
</dbReference>
<dbReference type="EMBL" id="BC049042">
    <property type="protein sequence ID" value="AAH49042.1"/>
    <property type="molecule type" value="mRNA"/>
</dbReference>
<dbReference type="RefSeq" id="NP_998588.1">
    <property type="nucleotide sequence ID" value="NM_213423.1"/>
</dbReference>
<dbReference type="SMR" id="Q7ZTI5"/>
<dbReference type="FunCoup" id="Q7ZTI5">
    <property type="interactions" value="1532"/>
</dbReference>
<dbReference type="STRING" id="7955.ENSDARP00000036773"/>
<dbReference type="PaxDb" id="7955-ENSDARP00000036773"/>
<dbReference type="Ensembl" id="ENSDART00000032460">
    <property type="protein sequence ID" value="ENSDARP00000036773"/>
    <property type="gene ID" value="ENSDARG00000026839"/>
</dbReference>
<dbReference type="GeneID" id="406732"/>
<dbReference type="KEGG" id="dre:406732"/>
<dbReference type="AGR" id="ZFIN:ZDB-GENE-040426-2763"/>
<dbReference type="CTD" id="9412"/>
<dbReference type="ZFIN" id="ZDB-GENE-040426-2763">
    <property type="gene designation" value="med21"/>
</dbReference>
<dbReference type="eggNOG" id="KOG1510">
    <property type="taxonomic scope" value="Eukaryota"/>
</dbReference>
<dbReference type="HOGENOM" id="CLU_126757_0_0_1"/>
<dbReference type="InParanoid" id="Q7ZTI5"/>
<dbReference type="OMA" id="DSFPIEA"/>
<dbReference type="OrthoDB" id="526653at2759"/>
<dbReference type="PhylomeDB" id="Q7ZTI5"/>
<dbReference type="PRO" id="PR:Q7ZTI5"/>
<dbReference type="Proteomes" id="UP000000437">
    <property type="component" value="Chromosome 4"/>
</dbReference>
<dbReference type="Bgee" id="ENSDARG00000026839">
    <property type="expression patterns" value="Expressed in ovary and 28 other cell types or tissues"/>
</dbReference>
<dbReference type="GO" id="GO:0016592">
    <property type="term" value="C:mediator complex"/>
    <property type="evidence" value="ECO:0000318"/>
    <property type="project" value="GO_Central"/>
</dbReference>
<dbReference type="GO" id="GO:0003712">
    <property type="term" value="F:transcription coregulator activity"/>
    <property type="evidence" value="ECO:0000318"/>
    <property type="project" value="GO_Central"/>
</dbReference>
<dbReference type="GO" id="GO:0006357">
    <property type="term" value="P:regulation of transcription by RNA polymerase II"/>
    <property type="evidence" value="ECO:0000318"/>
    <property type="project" value="GO_Central"/>
</dbReference>
<dbReference type="Gene3D" id="6.10.280.10">
    <property type="entry name" value="Mediator complex, subunit Med21"/>
    <property type="match status" value="1"/>
</dbReference>
<dbReference type="InterPro" id="IPR037212">
    <property type="entry name" value="Med7/Med21-like"/>
</dbReference>
<dbReference type="InterPro" id="IPR021384">
    <property type="entry name" value="Mediator_Med21"/>
</dbReference>
<dbReference type="PANTHER" id="PTHR13381:SF0">
    <property type="entry name" value="MEDIATOR OF RNA POLYMERASE II TRANSCRIPTION SUBUNIT 21"/>
    <property type="match status" value="1"/>
</dbReference>
<dbReference type="PANTHER" id="PTHR13381">
    <property type="entry name" value="RNA POLYMERASE II HOLOENZYME COMPONENT SRB7"/>
    <property type="match status" value="1"/>
</dbReference>
<dbReference type="Pfam" id="PF11221">
    <property type="entry name" value="Med21"/>
    <property type="match status" value="1"/>
</dbReference>
<dbReference type="SUPFAM" id="SSF140718">
    <property type="entry name" value="Mediator hinge subcomplex-like"/>
    <property type="match status" value="1"/>
</dbReference>